<comment type="function">
    <text evidence="1">Catalyzes the phosphorylation of the position 2 hydroxy group of 4-diphosphocytidyl-2C-methyl-D-erythritol.</text>
</comment>
<comment type="catalytic activity">
    <reaction evidence="1">
        <text>4-CDP-2-C-methyl-D-erythritol + ATP = 4-CDP-2-C-methyl-D-erythritol 2-phosphate + ADP + H(+)</text>
        <dbReference type="Rhea" id="RHEA:18437"/>
        <dbReference type="ChEBI" id="CHEBI:15378"/>
        <dbReference type="ChEBI" id="CHEBI:30616"/>
        <dbReference type="ChEBI" id="CHEBI:57823"/>
        <dbReference type="ChEBI" id="CHEBI:57919"/>
        <dbReference type="ChEBI" id="CHEBI:456216"/>
        <dbReference type="EC" id="2.7.1.148"/>
    </reaction>
</comment>
<comment type="pathway">
    <text evidence="1">Isoprenoid biosynthesis; isopentenyl diphosphate biosynthesis via DXP pathway; isopentenyl diphosphate from 1-deoxy-D-xylulose 5-phosphate: step 3/6.</text>
</comment>
<comment type="similarity">
    <text evidence="1">Belongs to the GHMP kinase family. IspE subfamily.</text>
</comment>
<reference key="1">
    <citation type="journal article" date="2003" name="Science">
        <title>Role of mobile DNA in the evolution of vancomycin-resistant Enterococcus faecalis.</title>
        <authorList>
            <person name="Paulsen I.T."/>
            <person name="Banerjei L."/>
            <person name="Myers G.S.A."/>
            <person name="Nelson K.E."/>
            <person name="Seshadri R."/>
            <person name="Read T.D."/>
            <person name="Fouts D.E."/>
            <person name="Eisen J.A."/>
            <person name="Gill S.R."/>
            <person name="Heidelberg J.F."/>
            <person name="Tettelin H."/>
            <person name="Dodson R.J."/>
            <person name="Umayam L.A."/>
            <person name="Brinkac L.M."/>
            <person name="Beanan M.J."/>
            <person name="Daugherty S.C."/>
            <person name="DeBoy R.T."/>
            <person name="Durkin S.A."/>
            <person name="Kolonay J.F."/>
            <person name="Madupu R."/>
            <person name="Nelson W.C."/>
            <person name="Vamathevan J.J."/>
            <person name="Tran B."/>
            <person name="Upton J."/>
            <person name="Hansen T."/>
            <person name="Shetty J."/>
            <person name="Khouri H.M."/>
            <person name="Utterback T.R."/>
            <person name="Radune D."/>
            <person name="Ketchum K.A."/>
            <person name="Dougherty B.A."/>
            <person name="Fraser C.M."/>
        </authorList>
    </citation>
    <scope>NUCLEOTIDE SEQUENCE [LARGE SCALE GENOMIC DNA]</scope>
    <source>
        <strain>ATCC 700802 / V583</strain>
    </source>
</reference>
<gene>
    <name evidence="1" type="primary">ispE</name>
    <name type="ordered locus">EF_0051</name>
</gene>
<sequence>MEIIERAPAKINLGLDVLHKRVDGYHEVESIFASVDLADHLTFENLEEDIIRIETDSSFLPVDRRNHVYQAVDLLKRTYNIHKGIKIYIEKRIPVAAGLAGGSSDCAAALRGLNKLWNLGLTMDELCEIGSQIGMDVPYCLRGGTAFANGRGEKIEALPTMPQCWIVLVKPRISVSTSTVFNDLAVDELHHPDIAGLRIAIENGDYTGMTQTVGNALESVTIARHPIVQQIKDRMLKYGADAALMSGSGPTVFALCEKKTRAQRIYNGLKGFCEEVYLVRTLK</sequence>
<name>ISPE_ENTFA</name>
<keyword id="KW-0067">ATP-binding</keyword>
<keyword id="KW-0414">Isoprene biosynthesis</keyword>
<keyword id="KW-0418">Kinase</keyword>
<keyword id="KW-0547">Nucleotide-binding</keyword>
<keyword id="KW-1185">Reference proteome</keyword>
<keyword id="KW-0808">Transferase</keyword>
<evidence type="ECO:0000255" key="1">
    <source>
        <dbReference type="HAMAP-Rule" id="MF_00061"/>
    </source>
</evidence>
<protein>
    <recommendedName>
        <fullName evidence="1">4-diphosphocytidyl-2-C-methyl-D-erythritol kinase</fullName>
        <shortName evidence="1">CMK</shortName>
        <ecNumber evidence="1">2.7.1.148</ecNumber>
    </recommendedName>
    <alternativeName>
        <fullName evidence="1">4-(cytidine-5'-diphospho)-2-C-methyl-D-erythritol kinase</fullName>
    </alternativeName>
</protein>
<feature type="chain" id="PRO_0000189218" description="4-diphosphocytidyl-2-C-methyl-D-erythritol kinase">
    <location>
        <begin position="1"/>
        <end position="283"/>
    </location>
</feature>
<feature type="active site" evidence="1">
    <location>
        <position position="10"/>
    </location>
</feature>
<feature type="active site" evidence="1">
    <location>
        <position position="136"/>
    </location>
</feature>
<feature type="binding site" evidence="1">
    <location>
        <begin position="94"/>
        <end position="104"/>
    </location>
    <ligand>
        <name>ATP</name>
        <dbReference type="ChEBI" id="CHEBI:30616"/>
    </ligand>
</feature>
<accession>Q839U9</accession>
<proteinExistence type="inferred from homology"/>
<dbReference type="EC" id="2.7.1.148" evidence="1"/>
<dbReference type="EMBL" id="AE016830">
    <property type="protein sequence ID" value="AAO79933.1"/>
    <property type="molecule type" value="Genomic_DNA"/>
</dbReference>
<dbReference type="RefSeq" id="NP_813861.1">
    <property type="nucleotide sequence ID" value="NC_004668.1"/>
</dbReference>
<dbReference type="RefSeq" id="WP_002356061.1">
    <property type="nucleotide sequence ID" value="NZ_KE136524.1"/>
</dbReference>
<dbReference type="SMR" id="Q839U9"/>
<dbReference type="STRING" id="226185.EF_0051"/>
<dbReference type="EnsemblBacteria" id="AAO79933">
    <property type="protein sequence ID" value="AAO79933"/>
    <property type="gene ID" value="EF_0051"/>
</dbReference>
<dbReference type="GeneID" id="60892610"/>
<dbReference type="KEGG" id="efa:EF0051"/>
<dbReference type="PATRIC" id="fig|226185.45.peg.205"/>
<dbReference type="eggNOG" id="COG1947">
    <property type="taxonomic scope" value="Bacteria"/>
</dbReference>
<dbReference type="HOGENOM" id="CLU_053057_1_1_9"/>
<dbReference type="UniPathway" id="UPA00056">
    <property type="reaction ID" value="UER00094"/>
</dbReference>
<dbReference type="Proteomes" id="UP000001415">
    <property type="component" value="Chromosome"/>
</dbReference>
<dbReference type="GO" id="GO:0050515">
    <property type="term" value="F:4-(cytidine 5'-diphospho)-2-C-methyl-D-erythritol kinase activity"/>
    <property type="evidence" value="ECO:0007669"/>
    <property type="project" value="UniProtKB-UniRule"/>
</dbReference>
<dbReference type="GO" id="GO:0005524">
    <property type="term" value="F:ATP binding"/>
    <property type="evidence" value="ECO:0007669"/>
    <property type="project" value="UniProtKB-UniRule"/>
</dbReference>
<dbReference type="GO" id="GO:0019288">
    <property type="term" value="P:isopentenyl diphosphate biosynthetic process, methylerythritol 4-phosphate pathway"/>
    <property type="evidence" value="ECO:0007669"/>
    <property type="project" value="UniProtKB-UniRule"/>
</dbReference>
<dbReference type="GO" id="GO:0016114">
    <property type="term" value="P:terpenoid biosynthetic process"/>
    <property type="evidence" value="ECO:0007669"/>
    <property type="project" value="InterPro"/>
</dbReference>
<dbReference type="FunFam" id="3.30.230.10:FF:000029">
    <property type="entry name" value="4-diphosphocytidyl-2-C-methyl-D-erythritol kinase"/>
    <property type="match status" value="1"/>
</dbReference>
<dbReference type="FunFam" id="3.30.70.890:FF:000006">
    <property type="entry name" value="4-diphosphocytidyl-2-C-methyl-D-erythritol kinase"/>
    <property type="match status" value="1"/>
</dbReference>
<dbReference type="Gene3D" id="3.30.230.10">
    <property type="match status" value="1"/>
</dbReference>
<dbReference type="Gene3D" id="3.30.70.890">
    <property type="entry name" value="GHMP kinase, C-terminal domain"/>
    <property type="match status" value="1"/>
</dbReference>
<dbReference type="HAMAP" id="MF_00061">
    <property type="entry name" value="IspE"/>
    <property type="match status" value="1"/>
</dbReference>
<dbReference type="InterPro" id="IPR013750">
    <property type="entry name" value="GHMP_kinase_C_dom"/>
</dbReference>
<dbReference type="InterPro" id="IPR036554">
    <property type="entry name" value="GHMP_kinase_C_sf"/>
</dbReference>
<dbReference type="InterPro" id="IPR006204">
    <property type="entry name" value="GHMP_kinase_N_dom"/>
</dbReference>
<dbReference type="InterPro" id="IPR004424">
    <property type="entry name" value="IspE"/>
</dbReference>
<dbReference type="InterPro" id="IPR020568">
    <property type="entry name" value="Ribosomal_Su5_D2-typ_SF"/>
</dbReference>
<dbReference type="InterPro" id="IPR014721">
    <property type="entry name" value="Ribsml_uS5_D2-typ_fold_subgr"/>
</dbReference>
<dbReference type="NCBIfam" id="TIGR00154">
    <property type="entry name" value="ispE"/>
    <property type="match status" value="1"/>
</dbReference>
<dbReference type="NCBIfam" id="NF011202">
    <property type="entry name" value="PRK14608.1"/>
    <property type="match status" value="1"/>
</dbReference>
<dbReference type="PANTHER" id="PTHR43527">
    <property type="entry name" value="4-DIPHOSPHOCYTIDYL-2-C-METHYL-D-ERYTHRITOL KINASE, CHLOROPLASTIC"/>
    <property type="match status" value="1"/>
</dbReference>
<dbReference type="PANTHER" id="PTHR43527:SF2">
    <property type="entry name" value="4-DIPHOSPHOCYTIDYL-2-C-METHYL-D-ERYTHRITOL KINASE, CHLOROPLASTIC"/>
    <property type="match status" value="1"/>
</dbReference>
<dbReference type="Pfam" id="PF08544">
    <property type="entry name" value="GHMP_kinases_C"/>
    <property type="match status" value="1"/>
</dbReference>
<dbReference type="Pfam" id="PF00288">
    <property type="entry name" value="GHMP_kinases_N"/>
    <property type="match status" value="1"/>
</dbReference>
<dbReference type="PIRSF" id="PIRSF010376">
    <property type="entry name" value="IspE"/>
    <property type="match status" value="1"/>
</dbReference>
<dbReference type="SUPFAM" id="SSF55060">
    <property type="entry name" value="GHMP Kinase, C-terminal domain"/>
    <property type="match status" value="1"/>
</dbReference>
<dbReference type="SUPFAM" id="SSF54211">
    <property type="entry name" value="Ribosomal protein S5 domain 2-like"/>
    <property type="match status" value="1"/>
</dbReference>
<organism>
    <name type="scientific">Enterococcus faecalis (strain ATCC 700802 / V583)</name>
    <dbReference type="NCBI Taxonomy" id="226185"/>
    <lineage>
        <taxon>Bacteria</taxon>
        <taxon>Bacillati</taxon>
        <taxon>Bacillota</taxon>
        <taxon>Bacilli</taxon>
        <taxon>Lactobacillales</taxon>
        <taxon>Enterococcaceae</taxon>
        <taxon>Enterococcus</taxon>
    </lineage>
</organism>